<reference key="1">
    <citation type="journal article" date="2001" name="Nature">
        <title>Complete genome sequence of a multiple drug resistant Salmonella enterica serovar Typhi CT18.</title>
        <authorList>
            <person name="Parkhill J."/>
            <person name="Dougan G."/>
            <person name="James K.D."/>
            <person name="Thomson N.R."/>
            <person name="Pickard D."/>
            <person name="Wain J."/>
            <person name="Churcher C.M."/>
            <person name="Mungall K.L."/>
            <person name="Bentley S.D."/>
            <person name="Holden M.T.G."/>
            <person name="Sebaihia M."/>
            <person name="Baker S."/>
            <person name="Basham D."/>
            <person name="Brooks K."/>
            <person name="Chillingworth T."/>
            <person name="Connerton P."/>
            <person name="Cronin A."/>
            <person name="Davis P."/>
            <person name="Davies R.M."/>
            <person name="Dowd L."/>
            <person name="White N."/>
            <person name="Farrar J."/>
            <person name="Feltwell T."/>
            <person name="Hamlin N."/>
            <person name="Haque A."/>
            <person name="Hien T.T."/>
            <person name="Holroyd S."/>
            <person name="Jagels K."/>
            <person name="Krogh A."/>
            <person name="Larsen T.S."/>
            <person name="Leather S."/>
            <person name="Moule S."/>
            <person name="O'Gaora P."/>
            <person name="Parry C."/>
            <person name="Quail M.A."/>
            <person name="Rutherford K.M."/>
            <person name="Simmonds M."/>
            <person name="Skelton J."/>
            <person name="Stevens K."/>
            <person name="Whitehead S."/>
            <person name="Barrell B.G."/>
        </authorList>
    </citation>
    <scope>NUCLEOTIDE SEQUENCE [LARGE SCALE GENOMIC DNA]</scope>
    <source>
        <strain>CT18</strain>
    </source>
</reference>
<reference key="2">
    <citation type="journal article" date="2003" name="J. Bacteriol.">
        <title>Comparative genomics of Salmonella enterica serovar Typhi strains Ty2 and CT18.</title>
        <authorList>
            <person name="Deng W."/>
            <person name="Liou S.-R."/>
            <person name="Plunkett G. III"/>
            <person name="Mayhew G.F."/>
            <person name="Rose D.J."/>
            <person name="Burland V."/>
            <person name="Kodoyianni V."/>
            <person name="Schwartz D.C."/>
            <person name="Blattner F.R."/>
        </authorList>
    </citation>
    <scope>NUCLEOTIDE SEQUENCE [LARGE SCALE GENOMIC DNA]</scope>
    <source>
        <strain>ATCC 700931 / Ty2</strain>
    </source>
</reference>
<comment type="similarity">
    <text evidence="2">Belongs to the SUI1 family.</text>
</comment>
<keyword id="KW-0648">Protein biosynthesis</keyword>
<keyword id="KW-0810">Translation regulation</keyword>
<protein>
    <recommendedName>
        <fullName>Uncharacterized protein YciH</fullName>
    </recommendedName>
</protein>
<name>YCIH_SALTI</name>
<organism>
    <name type="scientific">Salmonella typhi</name>
    <dbReference type="NCBI Taxonomy" id="90370"/>
    <lineage>
        <taxon>Bacteria</taxon>
        <taxon>Pseudomonadati</taxon>
        <taxon>Pseudomonadota</taxon>
        <taxon>Gammaproteobacteria</taxon>
        <taxon>Enterobacterales</taxon>
        <taxon>Enterobacteriaceae</taxon>
        <taxon>Salmonella</taxon>
    </lineage>
</organism>
<dbReference type="EMBL" id="AL513382">
    <property type="protein sequence ID" value="CAD08425.1"/>
    <property type="molecule type" value="Genomic_DNA"/>
</dbReference>
<dbReference type="EMBL" id="AE014613">
    <property type="protein sequence ID" value="AAO69246.1"/>
    <property type="molecule type" value="Genomic_DNA"/>
</dbReference>
<dbReference type="RefSeq" id="NP_455791.1">
    <property type="nucleotide sequence ID" value="NC_003198.1"/>
</dbReference>
<dbReference type="RefSeq" id="WP_001285199.1">
    <property type="nucleotide sequence ID" value="NZ_WSUR01000006.1"/>
</dbReference>
<dbReference type="SMR" id="P0A2G8"/>
<dbReference type="STRING" id="220341.gene:17585305"/>
<dbReference type="KEGG" id="stt:t1619"/>
<dbReference type="KEGG" id="sty:STY1345"/>
<dbReference type="PATRIC" id="fig|220341.7.peg.1354"/>
<dbReference type="eggNOG" id="COG0023">
    <property type="taxonomic scope" value="Bacteria"/>
</dbReference>
<dbReference type="HOGENOM" id="CLU_082805_4_0_6"/>
<dbReference type="OMA" id="KSKCGVG"/>
<dbReference type="OrthoDB" id="9792915at2"/>
<dbReference type="Proteomes" id="UP000000541">
    <property type="component" value="Chromosome"/>
</dbReference>
<dbReference type="Proteomes" id="UP000002670">
    <property type="component" value="Chromosome"/>
</dbReference>
<dbReference type="GO" id="GO:0003729">
    <property type="term" value="F:mRNA binding"/>
    <property type="evidence" value="ECO:0007669"/>
    <property type="project" value="TreeGrafter"/>
</dbReference>
<dbReference type="GO" id="GO:0003743">
    <property type="term" value="F:translation initiation factor activity"/>
    <property type="evidence" value="ECO:0007669"/>
    <property type="project" value="InterPro"/>
</dbReference>
<dbReference type="GO" id="GO:0001731">
    <property type="term" value="P:formation of translation preinitiation complex"/>
    <property type="evidence" value="ECO:0007669"/>
    <property type="project" value="TreeGrafter"/>
</dbReference>
<dbReference type="GO" id="GO:0006417">
    <property type="term" value="P:regulation of translation"/>
    <property type="evidence" value="ECO:0007669"/>
    <property type="project" value="UniProtKB-KW"/>
</dbReference>
<dbReference type="GO" id="GO:0002188">
    <property type="term" value="P:translation reinitiation"/>
    <property type="evidence" value="ECO:0007669"/>
    <property type="project" value="TreeGrafter"/>
</dbReference>
<dbReference type="CDD" id="cd11567">
    <property type="entry name" value="YciH_like"/>
    <property type="match status" value="1"/>
</dbReference>
<dbReference type="FunFam" id="3.30.780.10:FF:000002">
    <property type="entry name" value="Stress response translation initiation inhibitor"/>
    <property type="match status" value="1"/>
</dbReference>
<dbReference type="Gene3D" id="3.30.780.10">
    <property type="entry name" value="SUI1-like domain"/>
    <property type="match status" value="1"/>
</dbReference>
<dbReference type="InterPro" id="IPR050318">
    <property type="entry name" value="DENR/SUI1_TIF"/>
</dbReference>
<dbReference type="InterPro" id="IPR001950">
    <property type="entry name" value="SUI1"/>
</dbReference>
<dbReference type="InterPro" id="IPR005872">
    <property type="entry name" value="SUI1_arc_bac"/>
</dbReference>
<dbReference type="InterPro" id="IPR036877">
    <property type="entry name" value="SUI1_dom_sf"/>
</dbReference>
<dbReference type="NCBIfam" id="NF006536">
    <property type="entry name" value="PRK09019.1"/>
    <property type="match status" value="1"/>
</dbReference>
<dbReference type="NCBIfam" id="TIGR01158">
    <property type="entry name" value="SUI1_rel"/>
    <property type="match status" value="1"/>
</dbReference>
<dbReference type="PANTHER" id="PTHR12789:SF0">
    <property type="entry name" value="DENSITY-REGULATED PROTEIN"/>
    <property type="match status" value="1"/>
</dbReference>
<dbReference type="PANTHER" id="PTHR12789">
    <property type="entry name" value="DENSITY-REGULATED PROTEIN HOMOLOG"/>
    <property type="match status" value="1"/>
</dbReference>
<dbReference type="Pfam" id="PF01253">
    <property type="entry name" value="SUI1"/>
    <property type="match status" value="1"/>
</dbReference>
<dbReference type="PIRSF" id="PIRSF037511">
    <property type="entry name" value="Transl_init_SUI1_pro"/>
    <property type="match status" value="1"/>
</dbReference>
<dbReference type="SUPFAM" id="SSF55159">
    <property type="entry name" value="eIF1-like"/>
    <property type="match status" value="1"/>
</dbReference>
<dbReference type="PROSITE" id="PS50296">
    <property type="entry name" value="SUI1"/>
    <property type="match status" value="1"/>
</dbReference>
<sequence length="108" mass="11526">MSDSNSRLVYSTQTGRIEEPKTAPVRPKGDGIVRIQRQTSGRKGKGVCLITGIEMNDAELTKLAAELKKKCGCGGAVKEGIIEIQGDKRDLIKSLLEAKGMKVKLAGG</sequence>
<gene>
    <name type="primary">yciH</name>
    <name type="ordered locus">STY1345</name>
    <name type="ordered locus">t1619</name>
</gene>
<proteinExistence type="inferred from homology"/>
<evidence type="ECO:0000256" key="1">
    <source>
        <dbReference type="SAM" id="MobiDB-lite"/>
    </source>
</evidence>
<evidence type="ECO:0000305" key="2"/>
<feature type="chain" id="PRO_0000130596" description="Uncharacterized protein YciH">
    <location>
        <begin position="1"/>
        <end position="108"/>
    </location>
</feature>
<feature type="region of interest" description="Disordered" evidence="1">
    <location>
        <begin position="1"/>
        <end position="29"/>
    </location>
</feature>
<feature type="compositionally biased region" description="Polar residues" evidence="1">
    <location>
        <begin position="1"/>
        <end position="15"/>
    </location>
</feature>
<feature type="compositionally biased region" description="Basic and acidic residues" evidence="1">
    <location>
        <begin position="16"/>
        <end position="29"/>
    </location>
</feature>
<accession>P0A2G8</accession>
<accession>P20770</accession>